<organism>
    <name type="scientific">Enterococcus faecalis (strain ATCC 700802 / V583)</name>
    <dbReference type="NCBI Taxonomy" id="226185"/>
    <lineage>
        <taxon>Bacteria</taxon>
        <taxon>Bacillati</taxon>
        <taxon>Bacillota</taxon>
        <taxon>Bacilli</taxon>
        <taxon>Lactobacillales</taxon>
        <taxon>Enterococcaceae</taxon>
        <taxon>Enterococcus</taxon>
    </lineage>
</organism>
<reference key="1">
    <citation type="journal article" date="2003" name="Science">
        <title>Role of mobile DNA in the evolution of vancomycin-resistant Enterococcus faecalis.</title>
        <authorList>
            <person name="Paulsen I.T."/>
            <person name="Banerjei L."/>
            <person name="Myers G.S.A."/>
            <person name="Nelson K.E."/>
            <person name="Seshadri R."/>
            <person name="Read T.D."/>
            <person name="Fouts D.E."/>
            <person name="Eisen J.A."/>
            <person name="Gill S.R."/>
            <person name="Heidelberg J.F."/>
            <person name="Tettelin H."/>
            <person name="Dodson R.J."/>
            <person name="Umayam L.A."/>
            <person name="Brinkac L.M."/>
            <person name="Beanan M.J."/>
            <person name="Daugherty S.C."/>
            <person name="DeBoy R.T."/>
            <person name="Durkin S.A."/>
            <person name="Kolonay J.F."/>
            <person name="Madupu R."/>
            <person name="Nelson W.C."/>
            <person name="Vamathevan J.J."/>
            <person name="Tran B."/>
            <person name="Upton J."/>
            <person name="Hansen T."/>
            <person name="Shetty J."/>
            <person name="Khouri H.M."/>
            <person name="Utterback T.R."/>
            <person name="Radune D."/>
            <person name="Ketchum K.A."/>
            <person name="Dougherty B.A."/>
            <person name="Fraser C.M."/>
        </authorList>
    </citation>
    <scope>NUCLEOTIDE SEQUENCE [LARGE SCALE GENOMIC DNA]</scope>
    <source>
        <strain>ATCC 700802 / V583</strain>
    </source>
</reference>
<feature type="chain" id="PRO_0000189467" description="2-C-methyl-D-erythritol 2,4-cyclodiphosphate synthase">
    <location>
        <begin position="1"/>
        <end position="157"/>
    </location>
</feature>
<feature type="binding site" evidence="1">
    <location>
        <begin position="9"/>
        <end position="11"/>
    </location>
    <ligand>
        <name>4-CDP-2-C-methyl-D-erythritol 2-phosphate</name>
        <dbReference type="ChEBI" id="CHEBI:57919"/>
    </ligand>
</feature>
<feature type="binding site" evidence="1">
    <location>
        <position position="9"/>
    </location>
    <ligand>
        <name>a divalent metal cation</name>
        <dbReference type="ChEBI" id="CHEBI:60240"/>
    </ligand>
</feature>
<feature type="binding site" evidence="1">
    <location>
        <position position="11"/>
    </location>
    <ligand>
        <name>a divalent metal cation</name>
        <dbReference type="ChEBI" id="CHEBI:60240"/>
    </ligand>
</feature>
<feature type="binding site" evidence="1">
    <location>
        <begin position="35"/>
        <end position="36"/>
    </location>
    <ligand>
        <name>4-CDP-2-C-methyl-D-erythritol 2-phosphate</name>
        <dbReference type="ChEBI" id="CHEBI:57919"/>
    </ligand>
</feature>
<feature type="binding site" evidence="1">
    <location>
        <position position="43"/>
    </location>
    <ligand>
        <name>a divalent metal cation</name>
        <dbReference type="ChEBI" id="CHEBI:60240"/>
    </ligand>
</feature>
<feature type="binding site" evidence="1">
    <location>
        <begin position="57"/>
        <end position="59"/>
    </location>
    <ligand>
        <name>4-CDP-2-C-methyl-D-erythritol 2-phosphate</name>
        <dbReference type="ChEBI" id="CHEBI:57919"/>
    </ligand>
</feature>
<feature type="binding site" evidence="1">
    <location>
        <begin position="62"/>
        <end position="66"/>
    </location>
    <ligand>
        <name>4-CDP-2-C-methyl-D-erythritol 2-phosphate</name>
        <dbReference type="ChEBI" id="CHEBI:57919"/>
    </ligand>
</feature>
<feature type="binding site" evidence="1">
    <location>
        <begin position="133"/>
        <end position="136"/>
    </location>
    <ligand>
        <name>4-CDP-2-C-methyl-D-erythritol 2-phosphate</name>
        <dbReference type="ChEBI" id="CHEBI:57919"/>
    </ligand>
</feature>
<feature type="binding site" evidence="1">
    <location>
        <position position="140"/>
    </location>
    <ligand>
        <name>4-CDP-2-C-methyl-D-erythritol 2-phosphate</name>
        <dbReference type="ChEBI" id="CHEBI:57919"/>
    </ligand>
</feature>
<feature type="binding site" evidence="1">
    <location>
        <position position="143"/>
    </location>
    <ligand>
        <name>4-CDP-2-C-methyl-D-erythritol 2-phosphate</name>
        <dbReference type="ChEBI" id="CHEBI:57919"/>
    </ligand>
</feature>
<feature type="site" description="Transition state stabilizer" evidence="1">
    <location>
        <position position="35"/>
    </location>
</feature>
<feature type="site" description="Transition state stabilizer" evidence="1">
    <location>
        <position position="134"/>
    </location>
</feature>
<accession>Q839V8</accession>
<sequence length="157" mass="16692">MIRIGQGFDVHQLVPQRPLIIGGVTLPYEKGLLGHSDADVLTHAIIDAILGAAGLGDIGQLFPETDPQFKNANSVNLLKKVNEKVGRSGFTIGNIDCTILAEEPKMSPYLAEMKKNLAASCHLAVTQVNIKATTMETMGFVGKKEGIGAIAVALLEK</sequence>
<protein>
    <recommendedName>
        <fullName evidence="1">2-C-methyl-D-erythritol 2,4-cyclodiphosphate synthase</fullName>
        <shortName evidence="1">MECDP-synthase</shortName>
        <shortName evidence="1">MECPP-synthase</shortName>
        <shortName evidence="1">MECPS</shortName>
        <ecNumber evidence="1">4.6.1.12</ecNumber>
    </recommendedName>
</protein>
<proteinExistence type="inferred from homology"/>
<dbReference type="EC" id="4.6.1.12" evidence="1"/>
<dbReference type="EMBL" id="AE016830">
    <property type="protein sequence ID" value="AAO79924.1"/>
    <property type="molecule type" value="Genomic_DNA"/>
</dbReference>
<dbReference type="RefSeq" id="NP_813852.1">
    <property type="nucleotide sequence ID" value="NC_004668.1"/>
</dbReference>
<dbReference type="RefSeq" id="WP_002367570.1">
    <property type="nucleotide sequence ID" value="NZ_KE136524.1"/>
</dbReference>
<dbReference type="SMR" id="Q839V8"/>
<dbReference type="STRING" id="226185.EF_0042"/>
<dbReference type="EnsemblBacteria" id="AAO79924">
    <property type="protein sequence ID" value="AAO79924"/>
    <property type="gene ID" value="EF_0042"/>
</dbReference>
<dbReference type="KEGG" id="efa:EF0042"/>
<dbReference type="PATRIC" id="fig|226185.45.peg.214"/>
<dbReference type="eggNOG" id="COG0245">
    <property type="taxonomic scope" value="Bacteria"/>
</dbReference>
<dbReference type="HOGENOM" id="CLU_084630_2_0_9"/>
<dbReference type="UniPathway" id="UPA00056">
    <property type="reaction ID" value="UER00095"/>
</dbReference>
<dbReference type="Proteomes" id="UP000001415">
    <property type="component" value="Chromosome"/>
</dbReference>
<dbReference type="GO" id="GO:0008685">
    <property type="term" value="F:2-C-methyl-D-erythritol 2,4-cyclodiphosphate synthase activity"/>
    <property type="evidence" value="ECO:0007669"/>
    <property type="project" value="UniProtKB-UniRule"/>
</dbReference>
<dbReference type="GO" id="GO:0046872">
    <property type="term" value="F:metal ion binding"/>
    <property type="evidence" value="ECO:0007669"/>
    <property type="project" value="UniProtKB-KW"/>
</dbReference>
<dbReference type="GO" id="GO:0019288">
    <property type="term" value="P:isopentenyl diphosphate biosynthetic process, methylerythritol 4-phosphate pathway"/>
    <property type="evidence" value="ECO:0007669"/>
    <property type="project" value="UniProtKB-UniRule"/>
</dbReference>
<dbReference type="GO" id="GO:0016114">
    <property type="term" value="P:terpenoid biosynthetic process"/>
    <property type="evidence" value="ECO:0007669"/>
    <property type="project" value="InterPro"/>
</dbReference>
<dbReference type="CDD" id="cd00554">
    <property type="entry name" value="MECDP_synthase"/>
    <property type="match status" value="1"/>
</dbReference>
<dbReference type="FunFam" id="3.30.1330.50:FF:000001">
    <property type="entry name" value="2-C-methyl-D-erythritol 2,4-cyclodiphosphate synthase"/>
    <property type="match status" value="1"/>
</dbReference>
<dbReference type="Gene3D" id="3.30.1330.50">
    <property type="entry name" value="2-C-methyl-D-erythritol 2,4-cyclodiphosphate synthase"/>
    <property type="match status" value="1"/>
</dbReference>
<dbReference type="HAMAP" id="MF_00107">
    <property type="entry name" value="IspF"/>
    <property type="match status" value="1"/>
</dbReference>
<dbReference type="InterPro" id="IPR003526">
    <property type="entry name" value="MECDP_synthase"/>
</dbReference>
<dbReference type="InterPro" id="IPR020555">
    <property type="entry name" value="MECDP_synthase_CS"/>
</dbReference>
<dbReference type="InterPro" id="IPR036571">
    <property type="entry name" value="MECDP_synthase_sf"/>
</dbReference>
<dbReference type="NCBIfam" id="TIGR00151">
    <property type="entry name" value="ispF"/>
    <property type="match status" value="1"/>
</dbReference>
<dbReference type="PANTHER" id="PTHR43181">
    <property type="entry name" value="2-C-METHYL-D-ERYTHRITOL 2,4-CYCLODIPHOSPHATE SYNTHASE, CHLOROPLASTIC"/>
    <property type="match status" value="1"/>
</dbReference>
<dbReference type="PANTHER" id="PTHR43181:SF1">
    <property type="entry name" value="2-C-METHYL-D-ERYTHRITOL 2,4-CYCLODIPHOSPHATE SYNTHASE, CHLOROPLASTIC"/>
    <property type="match status" value="1"/>
</dbReference>
<dbReference type="Pfam" id="PF02542">
    <property type="entry name" value="YgbB"/>
    <property type="match status" value="1"/>
</dbReference>
<dbReference type="SUPFAM" id="SSF69765">
    <property type="entry name" value="IpsF-like"/>
    <property type="match status" value="1"/>
</dbReference>
<dbReference type="PROSITE" id="PS01350">
    <property type="entry name" value="ISPF"/>
    <property type="match status" value="1"/>
</dbReference>
<name>ISPF_ENTFA</name>
<comment type="function">
    <text evidence="1">Involved in the biosynthesis of isopentenyl diphosphate (IPP) and dimethylallyl diphosphate (DMAPP), two major building blocks of isoprenoid compounds. Catalyzes the conversion of 4-diphosphocytidyl-2-C-methyl-D-erythritol 2-phosphate (CDP-ME2P) to 2-C-methyl-D-erythritol 2,4-cyclodiphosphate (ME-CPP) with a corresponding release of cytidine 5-monophosphate (CMP).</text>
</comment>
<comment type="catalytic activity">
    <reaction evidence="1">
        <text>4-CDP-2-C-methyl-D-erythritol 2-phosphate = 2-C-methyl-D-erythritol 2,4-cyclic diphosphate + CMP</text>
        <dbReference type="Rhea" id="RHEA:23864"/>
        <dbReference type="ChEBI" id="CHEBI:57919"/>
        <dbReference type="ChEBI" id="CHEBI:58483"/>
        <dbReference type="ChEBI" id="CHEBI:60377"/>
        <dbReference type="EC" id="4.6.1.12"/>
    </reaction>
</comment>
<comment type="cofactor">
    <cofactor evidence="1">
        <name>a divalent metal cation</name>
        <dbReference type="ChEBI" id="CHEBI:60240"/>
    </cofactor>
    <text evidence="1">Binds 1 divalent metal cation per subunit.</text>
</comment>
<comment type="pathway">
    <text evidence="1">Isoprenoid biosynthesis; isopentenyl diphosphate biosynthesis via DXP pathway; isopentenyl diphosphate from 1-deoxy-D-xylulose 5-phosphate: step 4/6.</text>
</comment>
<comment type="subunit">
    <text evidence="1">Homotrimer.</text>
</comment>
<comment type="similarity">
    <text evidence="1">Belongs to the IspF family.</text>
</comment>
<keyword id="KW-0414">Isoprene biosynthesis</keyword>
<keyword id="KW-0456">Lyase</keyword>
<keyword id="KW-0479">Metal-binding</keyword>
<keyword id="KW-1185">Reference proteome</keyword>
<evidence type="ECO:0000255" key="1">
    <source>
        <dbReference type="HAMAP-Rule" id="MF_00107"/>
    </source>
</evidence>
<gene>
    <name evidence="1" type="primary">ispF</name>
    <name type="ordered locus">EF_0042</name>
</gene>